<evidence type="ECO:0000255" key="1">
    <source>
        <dbReference type="HAMAP-Rule" id="MF_01871"/>
    </source>
</evidence>
<evidence type="ECO:0000256" key="2">
    <source>
        <dbReference type="SAM" id="MobiDB-lite"/>
    </source>
</evidence>
<feature type="chain" id="PRO_0000387233" description="Probable inorganic carbon transporter subunit DabA">
    <location>
        <begin position="1"/>
        <end position="845"/>
    </location>
</feature>
<feature type="region of interest" description="Disordered" evidence="2">
    <location>
        <begin position="1"/>
        <end position="20"/>
    </location>
</feature>
<feature type="binding site" evidence="1">
    <location>
        <position position="345"/>
    </location>
    <ligand>
        <name>Zn(2+)</name>
        <dbReference type="ChEBI" id="CHEBI:29105"/>
    </ligand>
</feature>
<feature type="binding site" evidence="1">
    <location>
        <position position="347"/>
    </location>
    <ligand>
        <name>Zn(2+)</name>
        <dbReference type="ChEBI" id="CHEBI:29105"/>
    </ligand>
</feature>
<feature type="binding site" evidence="1">
    <location>
        <position position="516"/>
    </location>
    <ligand>
        <name>Zn(2+)</name>
        <dbReference type="ChEBI" id="CHEBI:29105"/>
    </ligand>
</feature>
<feature type="binding site" evidence="1">
    <location>
        <position position="531"/>
    </location>
    <ligand>
        <name>Zn(2+)</name>
        <dbReference type="ChEBI" id="CHEBI:29105"/>
    </ligand>
</feature>
<organism>
    <name type="scientific">Azotobacter vinelandii (strain DJ / ATCC BAA-1303)</name>
    <dbReference type="NCBI Taxonomy" id="322710"/>
    <lineage>
        <taxon>Bacteria</taxon>
        <taxon>Pseudomonadati</taxon>
        <taxon>Pseudomonadota</taxon>
        <taxon>Gammaproteobacteria</taxon>
        <taxon>Pseudomonadales</taxon>
        <taxon>Pseudomonadaceae</taxon>
        <taxon>Azotobacter</taxon>
    </lineage>
</organism>
<keyword id="KW-0997">Cell inner membrane</keyword>
<keyword id="KW-1003">Cell membrane</keyword>
<keyword id="KW-0472">Membrane</keyword>
<keyword id="KW-0479">Metal-binding</keyword>
<keyword id="KW-0813">Transport</keyword>
<keyword id="KW-0862">Zinc</keyword>
<gene>
    <name evidence="1" type="primary">dabA</name>
    <name type="ordered locus">Avin_17870</name>
</gene>
<proteinExistence type="inferred from homology"/>
<dbReference type="EMBL" id="CP001157">
    <property type="protein sequence ID" value="ACO78000.1"/>
    <property type="molecule type" value="Genomic_DNA"/>
</dbReference>
<dbReference type="RefSeq" id="WP_012700410.1">
    <property type="nucleotide sequence ID" value="NC_012560.1"/>
</dbReference>
<dbReference type="STRING" id="322710.Avin_17870"/>
<dbReference type="EnsemblBacteria" id="ACO78000">
    <property type="protein sequence ID" value="ACO78000"/>
    <property type="gene ID" value="Avin_17870"/>
</dbReference>
<dbReference type="GeneID" id="88185046"/>
<dbReference type="KEGG" id="avn:Avin_17870"/>
<dbReference type="eggNOG" id="COG3002">
    <property type="taxonomic scope" value="Bacteria"/>
</dbReference>
<dbReference type="HOGENOM" id="CLU_009885_0_0_6"/>
<dbReference type="OrthoDB" id="9805101at2"/>
<dbReference type="Proteomes" id="UP000002424">
    <property type="component" value="Chromosome"/>
</dbReference>
<dbReference type="GO" id="GO:0005886">
    <property type="term" value="C:plasma membrane"/>
    <property type="evidence" value="ECO:0007669"/>
    <property type="project" value="UniProtKB-SubCell"/>
</dbReference>
<dbReference type="GO" id="GO:0008270">
    <property type="term" value="F:zinc ion binding"/>
    <property type="evidence" value="ECO:0007669"/>
    <property type="project" value="UniProtKB-UniRule"/>
</dbReference>
<dbReference type="HAMAP" id="MF_01871">
    <property type="entry name" value="DabA"/>
    <property type="match status" value="1"/>
</dbReference>
<dbReference type="InterPro" id="IPR018752">
    <property type="entry name" value="DabA"/>
</dbReference>
<dbReference type="PANTHER" id="PTHR38344:SF1">
    <property type="entry name" value="INORGANIC CARBON TRANSPORTER SUBUNIT DABA-RELATED"/>
    <property type="match status" value="1"/>
</dbReference>
<dbReference type="PANTHER" id="PTHR38344">
    <property type="entry name" value="UPF0753 PROTEIN AQ_863"/>
    <property type="match status" value="1"/>
</dbReference>
<dbReference type="Pfam" id="PF10070">
    <property type="entry name" value="DabA"/>
    <property type="match status" value="1"/>
</dbReference>
<name>DABA_AZOVD</name>
<reference key="1">
    <citation type="journal article" date="2009" name="J. Bacteriol.">
        <title>Genome sequence of Azotobacter vinelandii, an obligate aerobe specialized to support diverse anaerobic metabolic processes.</title>
        <authorList>
            <person name="Setubal J.C."/>
            <person name="Dos Santos P."/>
            <person name="Goldman B.S."/>
            <person name="Ertesvaag H."/>
            <person name="Espin G."/>
            <person name="Rubio L.M."/>
            <person name="Valla S."/>
            <person name="Almeida N.F."/>
            <person name="Balasubramanian D."/>
            <person name="Cromes L."/>
            <person name="Curatti L."/>
            <person name="Du Z."/>
            <person name="Godsy E."/>
            <person name="Goodner B."/>
            <person name="Hellner-Burris K."/>
            <person name="Hernandez J.A."/>
            <person name="Houmiel K."/>
            <person name="Imperial J."/>
            <person name="Kennedy C."/>
            <person name="Larson T.J."/>
            <person name="Latreille P."/>
            <person name="Ligon L.S."/>
            <person name="Lu J."/>
            <person name="Maerk M."/>
            <person name="Miller N.M."/>
            <person name="Norton S."/>
            <person name="O'Carroll I.P."/>
            <person name="Paulsen I."/>
            <person name="Raulfs E.C."/>
            <person name="Roemer R."/>
            <person name="Rosser J."/>
            <person name="Segura D."/>
            <person name="Slater S."/>
            <person name="Stricklin S.L."/>
            <person name="Studholme D.J."/>
            <person name="Sun J."/>
            <person name="Viana C.J."/>
            <person name="Wallin E."/>
            <person name="Wang B."/>
            <person name="Wheeler C."/>
            <person name="Zhu H."/>
            <person name="Dean D.R."/>
            <person name="Dixon R."/>
            <person name="Wood D."/>
        </authorList>
    </citation>
    <scope>NUCLEOTIDE SEQUENCE [LARGE SCALE GENOMIC DNA]</scope>
    <source>
        <strain>DJ / ATCC BAA-1303</strain>
    </source>
</reference>
<sequence>MPMASGDESMSARSENPVQSARFDEATVLHELEHYLPKQAPLKDFVHHNTLHAFQDSKFHDAARNASGIFGYNLSLKLDKYRDLYHRGEITPAVLDWVVRRHKGDQSDLWKTKVVAGSFAPPPLPRIGAVRANWKKNLRIDLDSLVHPLLFRILCSYLDQGISMWTFPSGGEGFLCAIRELERHSFTSFFRRERARRLLLEQDCSIAGLLKLLVRDEALFERYLFDQQFAHPGWSGMVTVIEAQPDTLIDSRRIGLRELIVFELLLEIDALDEHFDEQWSPLEAELGGEPLDILAEVPRTELHDALAIWQEALEWSFYDPVLSAIQRQPAESPALPVKSFQGLFCIDDRICSFRRHIESLDPHCETYGTPGFFGVEFYFKPENAKSHTKVCPGSIEPRYLIKETGSRDRLEAEPHFSKHSHDLLGGWVISQTLGFWSAVKLFDSILKPSASPLGASSFRHMDRASSLTILNRSPDDREDGLQIGFSVAEMAERAENLLGSIGLTQDFAPIVYVVGHGASNTNNPHYAAYDCGACSGRPGSVNARVICFMLNHPEVRAILAGKGIEIPAATQFVGALHDTTRDEIAFYDEDSLSPDSRARHRANAAVFDKALALNAKERSRRFELTDSQQSPERVHEAVKARAVSLFEPRPELNHATNALCIVGRRFLSRKLFLDRRSFLNSYDYRVDPDGRFLLGILRAAAPVCGGINLEYFFSHVDNQKLGAGSKLPHNVMGLIGVANGNDGDLRPGLPSQMIEVHHPVRMMIVVEHFPAVVLNTIRQQPATWEWFANEWLNLTVVDPETHELFRFRDGIFEPYRALTERLEVAADLEKLFETQADNLPVLALS</sequence>
<accession>C1DDM9</accession>
<comment type="function">
    <text evidence="1">Part of an energy-coupled inorganic carbon pump.</text>
</comment>
<comment type="cofactor">
    <cofactor evidence="1">
        <name>Zn(2+)</name>
        <dbReference type="ChEBI" id="CHEBI:29105"/>
    </cofactor>
</comment>
<comment type="subunit">
    <text evidence="1">Forms a complex with DabB.</text>
</comment>
<comment type="subcellular location">
    <subcellularLocation>
        <location evidence="1">Cell inner membrane</location>
        <topology evidence="1">Peripheral membrane protein</topology>
    </subcellularLocation>
</comment>
<comment type="similarity">
    <text evidence="1">Belongs to the inorganic carbon transporter (TC 9.A.2) DabA family.</text>
</comment>
<protein>
    <recommendedName>
        <fullName evidence="1">Probable inorganic carbon transporter subunit DabA</fullName>
    </recommendedName>
</protein>